<feature type="chain" id="PRO_1000149839" description="tRNA pseudouridine synthase D">
    <location>
        <begin position="1"/>
        <end position="347"/>
    </location>
</feature>
<feature type="domain" description="TRUD" evidence="1">
    <location>
        <begin position="150"/>
        <end position="304"/>
    </location>
</feature>
<feature type="active site" description="Nucleophile" evidence="1">
    <location>
        <position position="78"/>
    </location>
</feature>
<keyword id="KW-0413">Isomerase</keyword>
<keyword id="KW-1185">Reference proteome</keyword>
<keyword id="KW-0819">tRNA processing</keyword>
<accession>Q2IFQ4</accession>
<dbReference type="EC" id="5.4.99.27" evidence="1"/>
<dbReference type="EMBL" id="CP000251">
    <property type="protein sequence ID" value="ABC83409.1"/>
    <property type="molecule type" value="Genomic_DNA"/>
</dbReference>
<dbReference type="RefSeq" id="WP_011422691.1">
    <property type="nucleotide sequence ID" value="NC_007760.1"/>
</dbReference>
<dbReference type="SMR" id="Q2IFQ4"/>
<dbReference type="STRING" id="290397.Adeh_3643"/>
<dbReference type="KEGG" id="ade:Adeh_3643"/>
<dbReference type="eggNOG" id="COG0585">
    <property type="taxonomic scope" value="Bacteria"/>
</dbReference>
<dbReference type="HOGENOM" id="CLU_005281_4_0_7"/>
<dbReference type="OrthoDB" id="1550679at2"/>
<dbReference type="Proteomes" id="UP000001935">
    <property type="component" value="Chromosome"/>
</dbReference>
<dbReference type="GO" id="GO:0005829">
    <property type="term" value="C:cytosol"/>
    <property type="evidence" value="ECO:0007669"/>
    <property type="project" value="TreeGrafter"/>
</dbReference>
<dbReference type="GO" id="GO:0003723">
    <property type="term" value="F:RNA binding"/>
    <property type="evidence" value="ECO:0007669"/>
    <property type="project" value="InterPro"/>
</dbReference>
<dbReference type="GO" id="GO:0160150">
    <property type="term" value="F:tRNA pseudouridine(13) synthase activity"/>
    <property type="evidence" value="ECO:0007669"/>
    <property type="project" value="UniProtKB-EC"/>
</dbReference>
<dbReference type="GO" id="GO:0031119">
    <property type="term" value="P:tRNA pseudouridine synthesis"/>
    <property type="evidence" value="ECO:0007669"/>
    <property type="project" value="UniProtKB-UniRule"/>
</dbReference>
<dbReference type="Gene3D" id="3.30.2350.20">
    <property type="entry name" value="TruD, catalytic domain"/>
    <property type="match status" value="1"/>
</dbReference>
<dbReference type="Gene3D" id="3.30.2340.10">
    <property type="entry name" value="TruD, insertion domain"/>
    <property type="match status" value="1"/>
</dbReference>
<dbReference type="HAMAP" id="MF_01082">
    <property type="entry name" value="TruD"/>
    <property type="match status" value="1"/>
</dbReference>
<dbReference type="InterPro" id="IPR020103">
    <property type="entry name" value="PsdUridine_synth_cat_dom_sf"/>
</dbReference>
<dbReference type="InterPro" id="IPR001656">
    <property type="entry name" value="PsdUridine_synth_TruD"/>
</dbReference>
<dbReference type="InterPro" id="IPR020119">
    <property type="entry name" value="PsdUridine_synth_TruD_CS"/>
</dbReference>
<dbReference type="InterPro" id="IPR011760">
    <property type="entry name" value="PsdUridine_synth_TruD_insert"/>
</dbReference>
<dbReference type="InterPro" id="IPR042214">
    <property type="entry name" value="TruD_catalytic"/>
</dbReference>
<dbReference type="InterPro" id="IPR043165">
    <property type="entry name" value="TruD_insert_sf"/>
</dbReference>
<dbReference type="InterPro" id="IPR050170">
    <property type="entry name" value="TruD_pseudoU_synthase"/>
</dbReference>
<dbReference type="PANTHER" id="PTHR47811">
    <property type="entry name" value="TRNA PSEUDOURIDINE SYNTHASE D"/>
    <property type="match status" value="1"/>
</dbReference>
<dbReference type="PANTHER" id="PTHR47811:SF1">
    <property type="entry name" value="TRNA PSEUDOURIDINE SYNTHASE D"/>
    <property type="match status" value="1"/>
</dbReference>
<dbReference type="Pfam" id="PF01142">
    <property type="entry name" value="TruD"/>
    <property type="match status" value="2"/>
</dbReference>
<dbReference type="SUPFAM" id="SSF55120">
    <property type="entry name" value="Pseudouridine synthase"/>
    <property type="match status" value="1"/>
</dbReference>
<dbReference type="PROSITE" id="PS50984">
    <property type="entry name" value="TRUD"/>
    <property type="match status" value="1"/>
</dbReference>
<dbReference type="PROSITE" id="PS01268">
    <property type="entry name" value="UPF0024"/>
    <property type="match status" value="1"/>
</dbReference>
<comment type="function">
    <text evidence="1">Responsible for synthesis of pseudouridine from uracil-13 in transfer RNAs.</text>
</comment>
<comment type="catalytic activity">
    <reaction evidence="1">
        <text>uridine(13) in tRNA = pseudouridine(13) in tRNA</text>
        <dbReference type="Rhea" id="RHEA:42540"/>
        <dbReference type="Rhea" id="RHEA-COMP:10105"/>
        <dbReference type="Rhea" id="RHEA-COMP:10106"/>
        <dbReference type="ChEBI" id="CHEBI:65314"/>
        <dbReference type="ChEBI" id="CHEBI:65315"/>
        <dbReference type="EC" id="5.4.99.27"/>
    </reaction>
</comment>
<comment type="similarity">
    <text evidence="1">Belongs to the pseudouridine synthase TruD family.</text>
</comment>
<gene>
    <name evidence="1" type="primary">truD</name>
    <name type="ordered locus">Adeh_3643</name>
</gene>
<organism>
    <name type="scientific">Anaeromyxobacter dehalogenans (strain 2CP-C)</name>
    <dbReference type="NCBI Taxonomy" id="290397"/>
    <lineage>
        <taxon>Bacteria</taxon>
        <taxon>Pseudomonadati</taxon>
        <taxon>Myxococcota</taxon>
        <taxon>Myxococcia</taxon>
        <taxon>Myxococcales</taxon>
        <taxon>Cystobacterineae</taxon>
        <taxon>Anaeromyxobacteraceae</taxon>
        <taxon>Anaeromyxobacter</taxon>
    </lineage>
</organism>
<evidence type="ECO:0000255" key="1">
    <source>
        <dbReference type="HAMAP-Rule" id="MF_01082"/>
    </source>
</evidence>
<reference key="1">
    <citation type="submission" date="2006-01" db="EMBL/GenBank/DDBJ databases">
        <title>Complete sequence of Anaeromyxobacter dehalogenans 2CP-C.</title>
        <authorList>
            <person name="Copeland A."/>
            <person name="Lucas S."/>
            <person name="Lapidus A."/>
            <person name="Barry K."/>
            <person name="Detter J.C."/>
            <person name="Glavina T."/>
            <person name="Hammon N."/>
            <person name="Israni S."/>
            <person name="Pitluck S."/>
            <person name="Brettin T."/>
            <person name="Bruce D."/>
            <person name="Han C."/>
            <person name="Tapia R."/>
            <person name="Gilna P."/>
            <person name="Kiss H."/>
            <person name="Schmutz J."/>
            <person name="Larimer F."/>
            <person name="Land M."/>
            <person name="Kyrpides N."/>
            <person name="Anderson I."/>
            <person name="Sanford R.A."/>
            <person name="Ritalahti K.M."/>
            <person name="Thomas H.S."/>
            <person name="Kirby J.R."/>
            <person name="Zhulin I.B."/>
            <person name="Loeffler F.E."/>
            <person name="Richardson P."/>
        </authorList>
    </citation>
    <scope>NUCLEOTIDE SEQUENCE [LARGE SCALE GENOMIC DNA]</scope>
    <source>
        <strain>2CP-C</strain>
    </source>
</reference>
<name>TRUD_ANADE</name>
<sequence>MTDLPFVTADLPGSGGALRRAPEDFRVDEVPAYLPSGAGPHLYLRVEKRGRTTRDALRELARALGVPERDAGAAGLKDKDAVTTQWLSFPVARDPDPAALAAPGLRVLEVSRHQNKLRTGHVRANRFTLAVRGGDLARARDCAAALAARGLPNFFGPQRFGAAGRNAAVGRALVTGERSPEAGRAARDRFLRRLSLSAYQSLLFNRWLAERMADGRFAAALAGDVMKKLDTGGLFTCEDPATDGPRVERFEISPAGPMFGHALRLAGGEAGAREARLLEAEGIALADFVRGGGEAEGTRRAARLRIDVALEPLEDGYRAAFELPRGAYATVVMRELTKADAELPEED</sequence>
<protein>
    <recommendedName>
        <fullName evidence="1">tRNA pseudouridine synthase D</fullName>
        <ecNumber evidence="1">5.4.99.27</ecNumber>
    </recommendedName>
    <alternativeName>
        <fullName evidence="1">tRNA pseudouridine(13) synthase</fullName>
    </alternativeName>
    <alternativeName>
        <fullName evidence="1">tRNA pseudouridylate synthase D</fullName>
    </alternativeName>
    <alternativeName>
        <fullName evidence="1">tRNA-uridine isomerase D</fullName>
    </alternativeName>
</protein>
<proteinExistence type="inferred from homology"/>